<evidence type="ECO:0000255" key="1">
    <source>
        <dbReference type="HAMAP-Rule" id="MF_00111"/>
    </source>
</evidence>
<sequence length="424" mass="45161">MDKLRMVGGTPLKGEVVIAGAKNAALPILCACLLTDQPVVLRNVPDLQDVRTMLKLLQEIGVTIDFPSAGDRSYMVLNAAVIKSSEATYEMVKTMRASILVLGPLLARMHSAKVSLPGGCAIGARPVDQHIKGLKAMGATIKIKSGYIQAETKPQSDRLKGASILTDMITVTGTENLLMAATLASGTTVLENAAREPEVGDLAELLVKMGAKISGIGSDRLVIEGVDKLHGAEHSVIPDRIEAGTFLCAVVATGGEITVKHCRPDTLDAVIVKLKEAGLQTEIGPDWIKASMQGRPKAVNFRTSEYPAFPTDMQAQLMTVNAIAAGSSMITETIFENRFMHVQELNRLGADIAIEGNTAIAQGVEKLSGAIVMATDLRASASLVIAGLAAQGETQVDRIYHLDRGYDRMEQKLTLLGANIERIK</sequence>
<accession>B1XSU7</accession>
<protein>
    <recommendedName>
        <fullName evidence="1">UDP-N-acetylglucosamine 1-carboxyvinyltransferase</fullName>
        <ecNumber evidence="1">2.5.1.7</ecNumber>
    </recommendedName>
    <alternativeName>
        <fullName evidence="1">Enoylpyruvate transferase</fullName>
    </alternativeName>
    <alternativeName>
        <fullName evidence="1">UDP-N-acetylglucosamine enolpyruvyl transferase</fullName>
        <shortName evidence="1">EPT</shortName>
    </alternativeName>
</protein>
<feature type="chain" id="PRO_1000094708" description="UDP-N-acetylglucosamine 1-carboxyvinyltransferase">
    <location>
        <begin position="1"/>
        <end position="424"/>
    </location>
</feature>
<feature type="active site" description="Proton donor" evidence="1">
    <location>
        <position position="120"/>
    </location>
</feature>
<feature type="binding site" evidence="1">
    <location>
        <begin position="22"/>
        <end position="23"/>
    </location>
    <ligand>
        <name>phosphoenolpyruvate</name>
        <dbReference type="ChEBI" id="CHEBI:58702"/>
    </ligand>
</feature>
<feature type="binding site" evidence="1">
    <location>
        <position position="96"/>
    </location>
    <ligand>
        <name>UDP-N-acetyl-alpha-D-glucosamine</name>
        <dbReference type="ChEBI" id="CHEBI:57705"/>
    </ligand>
</feature>
<feature type="binding site" evidence="1">
    <location>
        <begin position="125"/>
        <end position="129"/>
    </location>
    <ligand>
        <name>UDP-N-acetyl-alpha-D-glucosamine</name>
        <dbReference type="ChEBI" id="CHEBI:57705"/>
    </ligand>
</feature>
<feature type="binding site" evidence="1">
    <location>
        <position position="312"/>
    </location>
    <ligand>
        <name>UDP-N-acetyl-alpha-D-glucosamine</name>
        <dbReference type="ChEBI" id="CHEBI:57705"/>
    </ligand>
</feature>
<feature type="binding site" evidence="1">
    <location>
        <position position="334"/>
    </location>
    <ligand>
        <name>UDP-N-acetyl-alpha-D-glucosamine</name>
        <dbReference type="ChEBI" id="CHEBI:57705"/>
    </ligand>
</feature>
<feature type="modified residue" description="2-(S-cysteinyl)pyruvic acid O-phosphothioketal" evidence="1">
    <location>
        <position position="120"/>
    </location>
</feature>
<dbReference type="EC" id="2.5.1.7" evidence="1"/>
<dbReference type="EMBL" id="CP001010">
    <property type="protein sequence ID" value="ACB43424.1"/>
    <property type="molecule type" value="Genomic_DNA"/>
</dbReference>
<dbReference type="SMR" id="B1XSU7"/>
<dbReference type="STRING" id="452638.Pnec_0104"/>
<dbReference type="KEGG" id="pne:Pnec_0104"/>
<dbReference type="eggNOG" id="COG0766">
    <property type="taxonomic scope" value="Bacteria"/>
</dbReference>
<dbReference type="HOGENOM" id="CLU_027387_0_0_4"/>
<dbReference type="OrthoDB" id="9803760at2"/>
<dbReference type="UniPathway" id="UPA00219"/>
<dbReference type="GO" id="GO:0005737">
    <property type="term" value="C:cytoplasm"/>
    <property type="evidence" value="ECO:0007669"/>
    <property type="project" value="UniProtKB-SubCell"/>
</dbReference>
<dbReference type="GO" id="GO:0008760">
    <property type="term" value="F:UDP-N-acetylglucosamine 1-carboxyvinyltransferase activity"/>
    <property type="evidence" value="ECO:0007669"/>
    <property type="project" value="UniProtKB-UniRule"/>
</dbReference>
<dbReference type="GO" id="GO:0051301">
    <property type="term" value="P:cell division"/>
    <property type="evidence" value="ECO:0007669"/>
    <property type="project" value="UniProtKB-KW"/>
</dbReference>
<dbReference type="GO" id="GO:0071555">
    <property type="term" value="P:cell wall organization"/>
    <property type="evidence" value="ECO:0007669"/>
    <property type="project" value="UniProtKB-KW"/>
</dbReference>
<dbReference type="GO" id="GO:0009252">
    <property type="term" value="P:peptidoglycan biosynthetic process"/>
    <property type="evidence" value="ECO:0007669"/>
    <property type="project" value="UniProtKB-UniRule"/>
</dbReference>
<dbReference type="GO" id="GO:0008360">
    <property type="term" value="P:regulation of cell shape"/>
    <property type="evidence" value="ECO:0007669"/>
    <property type="project" value="UniProtKB-KW"/>
</dbReference>
<dbReference type="GO" id="GO:0019277">
    <property type="term" value="P:UDP-N-acetylgalactosamine biosynthetic process"/>
    <property type="evidence" value="ECO:0007669"/>
    <property type="project" value="InterPro"/>
</dbReference>
<dbReference type="CDD" id="cd01555">
    <property type="entry name" value="UdpNAET"/>
    <property type="match status" value="1"/>
</dbReference>
<dbReference type="FunFam" id="3.65.10.10:FF:000001">
    <property type="entry name" value="UDP-N-acetylglucosamine 1-carboxyvinyltransferase"/>
    <property type="match status" value="1"/>
</dbReference>
<dbReference type="Gene3D" id="3.65.10.10">
    <property type="entry name" value="Enolpyruvate transferase domain"/>
    <property type="match status" value="2"/>
</dbReference>
<dbReference type="HAMAP" id="MF_00111">
    <property type="entry name" value="MurA"/>
    <property type="match status" value="1"/>
</dbReference>
<dbReference type="InterPro" id="IPR001986">
    <property type="entry name" value="Enolpyruvate_Tfrase_dom"/>
</dbReference>
<dbReference type="InterPro" id="IPR036968">
    <property type="entry name" value="Enolpyruvate_Tfrase_sf"/>
</dbReference>
<dbReference type="InterPro" id="IPR050068">
    <property type="entry name" value="MurA_subfamily"/>
</dbReference>
<dbReference type="InterPro" id="IPR013792">
    <property type="entry name" value="RNA3'P_cycl/enolpyr_Trfase_a/b"/>
</dbReference>
<dbReference type="InterPro" id="IPR005750">
    <property type="entry name" value="UDP_GlcNAc_COvinyl_MurA"/>
</dbReference>
<dbReference type="NCBIfam" id="TIGR01072">
    <property type="entry name" value="murA"/>
    <property type="match status" value="1"/>
</dbReference>
<dbReference type="NCBIfam" id="NF006873">
    <property type="entry name" value="PRK09369.1"/>
    <property type="match status" value="1"/>
</dbReference>
<dbReference type="PANTHER" id="PTHR43783">
    <property type="entry name" value="UDP-N-ACETYLGLUCOSAMINE 1-CARBOXYVINYLTRANSFERASE"/>
    <property type="match status" value="1"/>
</dbReference>
<dbReference type="PANTHER" id="PTHR43783:SF1">
    <property type="entry name" value="UDP-N-ACETYLGLUCOSAMINE 1-CARBOXYVINYLTRANSFERASE"/>
    <property type="match status" value="1"/>
</dbReference>
<dbReference type="Pfam" id="PF00275">
    <property type="entry name" value="EPSP_synthase"/>
    <property type="match status" value="1"/>
</dbReference>
<dbReference type="SUPFAM" id="SSF55205">
    <property type="entry name" value="EPT/RTPC-like"/>
    <property type="match status" value="1"/>
</dbReference>
<keyword id="KW-0131">Cell cycle</keyword>
<keyword id="KW-0132">Cell division</keyword>
<keyword id="KW-0133">Cell shape</keyword>
<keyword id="KW-0961">Cell wall biogenesis/degradation</keyword>
<keyword id="KW-0963">Cytoplasm</keyword>
<keyword id="KW-0573">Peptidoglycan synthesis</keyword>
<keyword id="KW-0670">Pyruvate</keyword>
<keyword id="KW-0808">Transferase</keyword>
<gene>
    <name evidence="1" type="primary">murA</name>
    <name type="ordered locus">Pnec_0104</name>
</gene>
<proteinExistence type="inferred from homology"/>
<reference key="1">
    <citation type="journal article" date="2013" name="Proc. Natl. Acad. Sci. U.S.A.">
        <title>Polynucleobacter necessarius, a model for genome reduction in both free-living and symbiotic bacteria.</title>
        <authorList>
            <person name="Boscaro V."/>
            <person name="Felletti M."/>
            <person name="Vannini C."/>
            <person name="Ackerman M.S."/>
            <person name="Chain P.S."/>
            <person name="Malfatti S."/>
            <person name="Vergez L.M."/>
            <person name="Shin M."/>
            <person name="Doak T.G."/>
            <person name="Lynch M."/>
            <person name="Petroni G."/>
        </authorList>
    </citation>
    <scope>NUCLEOTIDE SEQUENCE [LARGE SCALE GENOMIC DNA]</scope>
    <source>
        <strain>STIR1</strain>
    </source>
</reference>
<comment type="function">
    <text evidence="1">Cell wall formation. Adds enolpyruvyl to UDP-N-acetylglucosamine.</text>
</comment>
<comment type="catalytic activity">
    <reaction evidence="1">
        <text>phosphoenolpyruvate + UDP-N-acetyl-alpha-D-glucosamine = UDP-N-acetyl-3-O-(1-carboxyvinyl)-alpha-D-glucosamine + phosphate</text>
        <dbReference type="Rhea" id="RHEA:18681"/>
        <dbReference type="ChEBI" id="CHEBI:43474"/>
        <dbReference type="ChEBI" id="CHEBI:57705"/>
        <dbReference type="ChEBI" id="CHEBI:58702"/>
        <dbReference type="ChEBI" id="CHEBI:68483"/>
        <dbReference type="EC" id="2.5.1.7"/>
    </reaction>
</comment>
<comment type="pathway">
    <text evidence="1">Cell wall biogenesis; peptidoglycan biosynthesis.</text>
</comment>
<comment type="subcellular location">
    <subcellularLocation>
        <location evidence="1">Cytoplasm</location>
    </subcellularLocation>
</comment>
<comment type="similarity">
    <text evidence="1">Belongs to the EPSP synthase family. MurA subfamily.</text>
</comment>
<organism>
    <name type="scientific">Polynucleobacter necessarius subsp. necessarius (strain STIR1)</name>
    <dbReference type="NCBI Taxonomy" id="452638"/>
    <lineage>
        <taxon>Bacteria</taxon>
        <taxon>Pseudomonadati</taxon>
        <taxon>Pseudomonadota</taxon>
        <taxon>Betaproteobacteria</taxon>
        <taxon>Burkholderiales</taxon>
        <taxon>Burkholderiaceae</taxon>
        <taxon>Polynucleobacter</taxon>
    </lineage>
</organism>
<name>MURA_POLNS</name>